<protein>
    <recommendedName>
        <fullName evidence="3">Syndecan-1</fullName>
        <shortName evidence="3">SYND1</shortName>
    </recommendedName>
    <cdAntigenName>CD138</cdAntigenName>
</protein>
<comment type="function">
    <text evidence="2 3">Cell surface proteoglycan that contains both heparan sulfate and chondroitin sulfate and that links the cytoskeleton to the interstitial matrix (By similarity). Regulates exosome biogenesis in concert with SDCBP and PDCD6IP (By similarity). Able to induce its own expression in dental mesenchymal cells and also in the neighboring dental epithelial cells via an MSX1-mediated pathway (By similarity).</text>
</comment>
<comment type="subunit">
    <text evidence="2 4">Interacts with CDCP1. Interacts (via C-terminus) with TIAM1 (via PDZ domain) (By similarity). Interacts with MDK (By similarity).</text>
</comment>
<comment type="subcellular location">
    <subcellularLocation>
        <location evidence="5">Membrane</location>
        <topology evidence="5">Single-pass type I membrane protein</topology>
    </subcellularLocation>
    <subcellularLocation>
        <location evidence="2">Secreted</location>
    </subcellularLocation>
    <subcellularLocation>
        <location evidence="2">Secreted</location>
        <location evidence="2">Extracellular exosome</location>
    </subcellularLocation>
    <text evidence="2">Shedding of the ectodomain produces a soluble form.</text>
</comment>
<comment type="PTM">
    <text evidence="2">Shedding is enhanced by a number of factors such as heparanase, thrombin or EGF. Also by stress and wound healing. PMA-mediated shedding is inhibited by TIMP3 (By similarity).</text>
</comment>
<comment type="similarity">
    <text evidence="7">Belongs to the syndecan proteoglycan family.</text>
</comment>
<gene>
    <name evidence="3" type="primary">SDC1</name>
</gene>
<sequence>MRRAALWLWLCALALRLQPVLPQIMAVNVPPEDQDGSGDDSDNFSGSGTGALPDITLSRQTSSTLKDVWLLTATPTAPEPTSRDTEATFTSILPAGEKPGEGEPVLIAEVDTSSTTWDKELEVTTRPRETTQLLVTHRVSTARATTAQAPVTSHPHRDVQPGLHETLAPTAPGQPDHQPPSGGTSVIKEVAEDGATNQLPTGEGSGEQDFTFETSGENTAVAAIEPDQRNQPPVDEGATGASQGLLDRKEVLGGVIAGGLVGLIFAVCLVGFMLYRMKKKDEGSYSLEEPKQANGGAYQKPTKQEEFYA</sequence>
<keyword id="KW-0325">Glycoprotein</keyword>
<keyword id="KW-0357">Heparan sulfate</keyword>
<keyword id="KW-0472">Membrane</keyword>
<keyword id="KW-0597">Phosphoprotein</keyword>
<keyword id="KW-0654">Proteoglycan</keyword>
<keyword id="KW-0964">Secreted</keyword>
<keyword id="KW-0732">Signal</keyword>
<keyword id="KW-0812">Transmembrane</keyword>
<keyword id="KW-1133">Transmembrane helix</keyword>
<name>SDC1_CRIGR</name>
<organism>
    <name type="scientific">Cricetulus griseus</name>
    <name type="common">Chinese hamster</name>
    <name type="synonym">Cricetulus barabensis griseus</name>
    <dbReference type="NCBI Taxonomy" id="10029"/>
    <lineage>
        <taxon>Eukaryota</taxon>
        <taxon>Metazoa</taxon>
        <taxon>Chordata</taxon>
        <taxon>Craniata</taxon>
        <taxon>Vertebrata</taxon>
        <taxon>Euteleostomi</taxon>
        <taxon>Mammalia</taxon>
        <taxon>Eutheria</taxon>
        <taxon>Euarchontoglires</taxon>
        <taxon>Glires</taxon>
        <taxon>Rodentia</taxon>
        <taxon>Myomorpha</taxon>
        <taxon>Muroidea</taxon>
        <taxon>Cricetidae</taxon>
        <taxon>Cricetinae</taxon>
        <taxon>Cricetulus</taxon>
    </lineage>
</organism>
<evidence type="ECO:0000250" key="1"/>
<evidence type="ECO:0000250" key="2">
    <source>
        <dbReference type="UniProtKB" id="P18827"/>
    </source>
</evidence>
<evidence type="ECO:0000250" key="3">
    <source>
        <dbReference type="UniProtKB" id="P18828"/>
    </source>
</evidence>
<evidence type="ECO:0000250" key="4">
    <source>
        <dbReference type="UniProtKB" id="P26260"/>
    </source>
</evidence>
<evidence type="ECO:0000255" key="5"/>
<evidence type="ECO:0000256" key="6">
    <source>
        <dbReference type="SAM" id="MobiDB-lite"/>
    </source>
</evidence>
<evidence type="ECO:0000305" key="7"/>
<accession>P47951</accession>
<feature type="signal peptide" evidence="5">
    <location>
        <begin position="1"/>
        <end position="22"/>
    </location>
</feature>
<feature type="chain" id="PRO_0000033498" description="Syndecan-1">
    <location>
        <begin position="23"/>
        <end position="309"/>
    </location>
</feature>
<feature type="topological domain" description="Extracellular" evidence="5">
    <location>
        <begin position="24"/>
        <end position="253"/>
    </location>
</feature>
<feature type="transmembrane region" description="Helical" evidence="5">
    <location>
        <begin position="254"/>
        <end position="274"/>
    </location>
</feature>
<feature type="topological domain" description="Cytoplasmic" evidence="5">
    <location>
        <begin position="275"/>
        <end position="309"/>
    </location>
</feature>
<feature type="region of interest" description="Disordered" evidence="6">
    <location>
        <begin position="28"/>
        <end position="57"/>
    </location>
</feature>
<feature type="region of interest" description="Disordered" evidence="6">
    <location>
        <begin position="142"/>
        <end position="185"/>
    </location>
</feature>
<feature type="region of interest" description="Disordered" evidence="6">
    <location>
        <begin position="283"/>
        <end position="309"/>
    </location>
</feature>
<feature type="compositionally biased region" description="Acidic residues" evidence="6">
    <location>
        <begin position="32"/>
        <end position="42"/>
    </location>
</feature>
<feature type="compositionally biased region" description="Polar residues" evidence="6">
    <location>
        <begin position="142"/>
        <end position="151"/>
    </location>
</feature>
<feature type="site" description="Cleavage of ectodomain" evidence="5">
    <location>
        <begin position="249"/>
        <end position="250"/>
    </location>
</feature>
<feature type="modified residue" description="Phosphoserine" evidence="2">
    <location>
        <position position="284"/>
    </location>
</feature>
<feature type="glycosylation site" description="O-linked (Xyl...) (chondroitin sulfate) serine" evidence="3">
    <location>
        <position position="37"/>
    </location>
</feature>
<feature type="glycosylation site" description="N-linked (GlcNAc...) asparagine" evidence="5">
    <location>
        <position position="43"/>
    </location>
</feature>
<feature type="glycosylation site" description="O-linked (Xyl...) (heparan sulfate) serine" evidence="1">
    <location>
        <position position="45"/>
    </location>
</feature>
<feature type="glycosylation site" description="O-linked (Xyl...) (heparan sulfate) serine" evidence="1">
    <location>
        <position position="47"/>
    </location>
</feature>
<feature type="glycosylation site" description="O-linked (Xyl...) (chondroitin sulfate) serine" evidence="2">
    <location>
        <position position="205"/>
    </location>
</feature>
<feature type="glycosylation site" description="O-linked (Xyl...) (chondroitin sulfate) serine" evidence="3">
    <location>
        <position position="215"/>
    </location>
</feature>
<reference key="1">
    <citation type="journal article" date="1995" name="J. Biol. Chem.">
        <title>Repetitive Ser-Gly sequences enhance heparan sulfate assembly in proteoglycans.</title>
        <authorList>
            <person name="Zhang L."/>
            <person name="David G."/>
            <person name="Esko J.D."/>
        </authorList>
    </citation>
    <scope>NUCLEOTIDE SEQUENCE [MRNA]</scope>
    <source>
        <tissue>Ovary</tissue>
    </source>
</reference>
<proteinExistence type="evidence at transcript level"/>
<dbReference type="EMBL" id="L38991">
    <property type="protein sequence ID" value="AAC37677.1"/>
    <property type="molecule type" value="mRNA"/>
</dbReference>
<dbReference type="PIR" id="I48125">
    <property type="entry name" value="I48125"/>
</dbReference>
<dbReference type="RefSeq" id="NP_001230971.1">
    <property type="nucleotide sequence ID" value="NM_001244042.1"/>
</dbReference>
<dbReference type="SMR" id="P47951"/>
<dbReference type="GlyCosmos" id="P47951">
    <property type="glycosylation" value="6 sites, No reported glycans"/>
</dbReference>
<dbReference type="PaxDb" id="10029-NP_001230971.1"/>
<dbReference type="Ensembl" id="ENSCGRT00001022644.1">
    <property type="protein sequence ID" value="ENSCGRP00001018400.1"/>
    <property type="gene ID" value="ENSCGRG00001018173.1"/>
</dbReference>
<dbReference type="GeneID" id="100689057"/>
<dbReference type="KEGG" id="cge:100689057"/>
<dbReference type="CTD" id="6382"/>
<dbReference type="eggNOG" id="ENOG502RZWT">
    <property type="taxonomic scope" value="Eukaryota"/>
</dbReference>
<dbReference type="GeneTree" id="ENSGT00940000161171"/>
<dbReference type="OrthoDB" id="10044468at2759"/>
<dbReference type="Proteomes" id="UP000694386">
    <property type="component" value="Unplaced"/>
</dbReference>
<dbReference type="Proteomes" id="UP001108280">
    <property type="component" value="Chromosome 7"/>
</dbReference>
<dbReference type="GO" id="GO:0009897">
    <property type="term" value="C:external side of plasma membrane"/>
    <property type="evidence" value="ECO:0007669"/>
    <property type="project" value="Ensembl"/>
</dbReference>
<dbReference type="GO" id="GO:0005576">
    <property type="term" value="C:extracellular region"/>
    <property type="evidence" value="ECO:0007669"/>
    <property type="project" value="UniProtKB-SubCell"/>
</dbReference>
<dbReference type="GO" id="GO:0038024">
    <property type="term" value="F:cargo receptor activity"/>
    <property type="evidence" value="ECO:0007669"/>
    <property type="project" value="Ensembl"/>
</dbReference>
<dbReference type="GO" id="GO:0042802">
    <property type="term" value="F:identical protein binding"/>
    <property type="evidence" value="ECO:0007669"/>
    <property type="project" value="Ensembl"/>
</dbReference>
<dbReference type="GO" id="GO:0060070">
    <property type="term" value="P:canonical Wnt signaling pathway"/>
    <property type="evidence" value="ECO:0007669"/>
    <property type="project" value="Ensembl"/>
</dbReference>
<dbReference type="GO" id="GO:0016477">
    <property type="term" value="P:cell migration"/>
    <property type="evidence" value="ECO:0007669"/>
    <property type="project" value="TreeGrafter"/>
</dbReference>
<dbReference type="GO" id="GO:0048627">
    <property type="term" value="P:myoblast development"/>
    <property type="evidence" value="ECO:0007669"/>
    <property type="project" value="Ensembl"/>
</dbReference>
<dbReference type="GO" id="GO:1903543">
    <property type="term" value="P:positive regulation of exosomal secretion"/>
    <property type="evidence" value="ECO:0007669"/>
    <property type="project" value="Ensembl"/>
</dbReference>
<dbReference type="GO" id="GO:1903553">
    <property type="term" value="P:positive regulation of extracellular exosome assembly"/>
    <property type="evidence" value="ECO:0007669"/>
    <property type="project" value="Ensembl"/>
</dbReference>
<dbReference type="GO" id="GO:0060143">
    <property type="term" value="P:positive regulation of syncytium formation by plasma membrane fusion"/>
    <property type="evidence" value="ECO:0000315"/>
    <property type="project" value="CACAO"/>
</dbReference>
<dbReference type="GO" id="GO:0006898">
    <property type="term" value="P:receptor-mediated endocytosis"/>
    <property type="evidence" value="ECO:0007669"/>
    <property type="project" value="Ensembl"/>
</dbReference>
<dbReference type="GO" id="GO:0055002">
    <property type="term" value="P:striated muscle cell development"/>
    <property type="evidence" value="ECO:0007669"/>
    <property type="project" value="Ensembl"/>
</dbReference>
<dbReference type="InterPro" id="IPR003585">
    <property type="entry name" value="Neurexin-like"/>
</dbReference>
<dbReference type="InterPro" id="IPR001050">
    <property type="entry name" value="Syndecan"/>
</dbReference>
<dbReference type="InterPro" id="IPR027789">
    <property type="entry name" value="Syndecan/Neurexin_dom"/>
</dbReference>
<dbReference type="InterPro" id="IPR030479">
    <property type="entry name" value="Syndecan_CS"/>
</dbReference>
<dbReference type="PANTHER" id="PTHR10915">
    <property type="entry name" value="SYNDECAN"/>
    <property type="match status" value="1"/>
</dbReference>
<dbReference type="PANTHER" id="PTHR10915:SF5">
    <property type="entry name" value="SYNDECAN-1"/>
    <property type="match status" value="1"/>
</dbReference>
<dbReference type="Pfam" id="PF01034">
    <property type="entry name" value="Syndecan"/>
    <property type="match status" value="1"/>
</dbReference>
<dbReference type="SMART" id="SM00294">
    <property type="entry name" value="4.1m"/>
    <property type="match status" value="1"/>
</dbReference>
<dbReference type="PROSITE" id="PS00964">
    <property type="entry name" value="SYNDECAN"/>
    <property type="match status" value="1"/>
</dbReference>